<proteinExistence type="inferred from homology"/>
<feature type="chain" id="PRO_0000230402" description="Small ribosomal subunit protein uS11">
    <location>
        <begin position="1"/>
        <end position="129"/>
    </location>
</feature>
<accession>Q30Z66</accession>
<sequence length="129" mass="13918">MARPKRVGKKKEKKSIPVGVAHIQATFNNTIITFTDTRGNTVSWASAGQSGFKGSRKSTPFAAQIAADQAARRAQENGMRTVGIFVKGPGSGRESAMRAINAAGFKVAFIRDITPIPHNGCRPPKRRRV</sequence>
<dbReference type="EMBL" id="CP000112">
    <property type="protein sequence ID" value="ABB39030.1"/>
    <property type="molecule type" value="Genomic_DNA"/>
</dbReference>
<dbReference type="RefSeq" id="WP_011368121.1">
    <property type="nucleotide sequence ID" value="NC_007519.1"/>
</dbReference>
<dbReference type="SMR" id="Q30Z66"/>
<dbReference type="STRING" id="207559.Dde_2233"/>
<dbReference type="KEGG" id="dde:Dde_2233"/>
<dbReference type="eggNOG" id="COG0100">
    <property type="taxonomic scope" value="Bacteria"/>
</dbReference>
<dbReference type="HOGENOM" id="CLU_072439_5_0_7"/>
<dbReference type="Proteomes" id="UP000002710">
    <property type="component" value="Chromosome"/>
</dbReference>
<dbReference type="GO" id="GO:1990904">
    <property type="term" value="C:ribonucleoprotein complex"/>
    <property type="evidence" value="ECO:0007669"/>
    <property type="project" value="UniProtKB-KW"/>
</dbReference>
<dbReference type="GO" id="GO:0005840">
    <property type="term" value="C:ribosome"/>
    <property type="evidence" value="ECO:0007669"/>
    <property type="project" value="UniProtKB-KW"/>
</dbReference>
<dbReference type="GO" id="GO:0019843">
    <property type="term" value="F:rRNA binding"/>
    <property type="evidence" value="ECO:0007669"/>
    <property type="project" value="UniProtKB-UniRule"/>
</dbReference>
<dbReference type="GO" id="GO:0003735">
    <property type="term" value="F:structural constituent of ribosome"/>
    <property type="evidence" value="ECO:0007669"/>
    <property type="project" value="InterPro"/>
</dbReference>
<dbReference type="GO" id="GO:0006412">
    <property type="term" value="P:translation"/>
    <property type="evidence" value="ECO:0007669"/>
    <property type="project" value="UniProtKB-UniRule"/>
</dbReference>
<dbReference type="FunFam" id="3.30.420.80:FF:000001">
    <property type="entry name" value="30S ribosomal protein S11"/>
    <property type="match status" value="1"/>
</dbReference>
<dbReference type="Gene3D" id="3.30.420.80">
    <property type="entry name" value="Ribosomal protein S11"/>
    <property type="match status" value="1"/>
</dbReference>
<dbReference type="HAMAP" id="MF_01310">
    <property type="entry name" value="Ribosomal_uS11"/>
    <property type="match status" value="1"/>
</dbReference>
<dbReference type="InterPro" id="IPR001971">
    <property type="entry name" value="Ribosomal_uS11"/>
</dbReference>
<dbReference type="InterPro" id="IPR019981">
    <property type="entry name" value="Ribosomal_uS11_bac-type"/>
</dbReference>
<dbReference type="InterPro" id="IPR018102">
    <property type="entry name" value="Ribosomal_uS11_CS"/>
</dbReference>
<dbReference type="InterPro" id="IPR036967">
    <property type="entry name" value="Ribosomal_uS11_sf"/>
</dbReference>
<dbReference type="NCBIfam" id="NF003698">
    <property type="entry name" value="PRK05309.1"/>
    <property type="match status" value="1"/>
</dbReference>
<dbReference type="NCBIfam" id="TIGR03632">
    <property type="entry name" value="uS11_bact"/>
    <property type="match status" value="1"/>
</dbReference>
<dbReference type="PANTHER" id="PTHR11759">
    <property type="entry name" value="40S RIBOSOMAL PROTEIN S14/30S RIBOSOMAL PROTEIN S11"/>
    <property type="match status" value="1"/>
</dbReference>
<dbReference type="Pfam" id="PF00411">
    <property type="entry name" value="Ribosomal_S11"/>
    <property type="match status" value="1"/>
</dbReference>
<dbReference type="PIRSF" id="PIRSF002131">
    <property type="entry name" value="Ribosomal_S11"/>
    <property type="match status" value="1"/>
</dbReference>
<dbReference type="SUPFAM" id="SSF53137">
    <property type="entry name" value="Translational machinery components"/>
    <property type="match status" value="1"/>
</dbReference>
<dbReference type="PROSITE" id="PS00054">
    <property type="entry name" value="RIBOSOMAL_S11"/>
    <property type="match status" value="1"/>
</dbReference>
<comment type="function">
    <text evidence="1">Located on the platform of the 30S subunit, it bridges several disparate RNA helices of the 16S rRNA. Forms part of the Shine-Dalgarno cleft in the 70S ribosome.</text>
</comment>
<comment type="subunit">
    <text evidence="1">Part of the 30S ribosomal subunit. Interacts with proteins S7 and S18. Binds to IF-3.</text>
</comment>
<comment type="similarity">
    <text evidence="1">Belongs to the universal ribosomal protein uS11 family.</text>
</comment>
<reference key="1">
    <citation type="journal article" date="2011" name="J. Bacteriol.">
        <title>Complete genome sequence and updated annotation of Desulfovibrio alaskensis G20.</title>
        <authorList>
            <person name="Hauser L.J."/>
            <person name="Land M.L."/>
            <person name="Brown S.D."/>
            <person name="Larimer F."/>
            <person name="Keller K.L."/>
            <person name="Rapp-Giles B.J."/>
            <person name="Price M.N."/>
            <person name="Lin M."/>
            <person name="Bruce D.C."/>
            <person name="Detter J.C."/>
            <person name="Tapia R."/>
            <person name="Han C.S."/>
            <person name="Goodwin L.A."/>
            <person name="Cheng J.F."/>
            <person name="Pitluck S."/>
            <person name="Copeland A."/>
            <person name="Lucas S."/>
            <person name="Nolan M."/>
            <person name="Lapidus A.L."/>
            <person name="Palumbo A.V."/>
            <person name="Wall J.D."/>
        </authorList>
    </citation>
    <scope>NUCLEOTIDE SEQUENCE [LARGE SCALE GENOMIC DNA]</scope>
    <source>
        <strain>ATCC BAA-1058 / DSM 17464 / G20</strain>
    </source>
</reference>
<name>RS11_OLEA2</name>
<organism>
    <name type="scientific">Oleidesulfovibrio alaskensis (strain ATCC BAA-1058 / DSM 17464 / G20)</name>
    <name type="common">Desulfovibrio alaskensis</name>
    <dbReference type="NCBI Taxonomy" id="207559"/>
    <lineage>
        <taxon>Bacteria</taxon>
        <taxon>Pseudomonadati</taxon>
        <taxon>Thermodesulfobacteriota</taxon>
        <taxon>Desulfovibrionia</taxon>
        <taxon>Desulfovibrionales</taxon>
        <taxon>Desulfovibrionaceae</taxon>
        <taxon>Oleidesulfovibrio</taxon>
    </lineage>
</organism>
<gene>
    <name evidence="1" type="primary">rpsK</name>
    <name type="ordered locus">Dde_2233</name>
</gene>
<evidence type="ECO:0000255" key="1">
    <source>
        <dbReference type="HAMAP-Rule" id="MF_01310"/>
    </source>
</evidence>
<evidence type="ECO:0000305" key="2"/>
<keyword id="KW-1185">Reference proteome</keyword>
<keyword id="KW-0687">Ribonucleoprotein</keyword>
<keyword id="KW-0689">Ribosomal protein</keyword>
<keyword id="KW-0694">RNA-binding</keyword>
<keyword id="KW-0699">rRNA-binding</keyword>
<protein>
    <recommendedName>
        <fullName evidence="1">Small ribosomal subunit protein uS11</fullName>
    </recommendedName>
    <alternativeName>
        <fullName evidence="2">30S ribosomal protein S11</fullName>
    </alternativeName>
</protein>